<gene>
    <name evidence="1" type="primary">rplT</name>
    <name type="ordered locus">SPA1507</name>
</gene>
<name>RL20_SALPA</name>
<keyword id="KW-0687">Ribonucleoprotein</keyword>
<keyword id="KW-0689">Ribosomal protein</keyword>
<keyword id="KW-0694">RNA-binding</keyword>
<keyword id="KW-0699">rRNA-binding</keyword>
<feature type="chain" id="PRO_0000243733" description="Large ribosomal subunit protein bL20">
    <location>
        <begin position="1"/>
        <end position="118"/>
    </location>
</feature>
<comment type="function">
    <text evidence="1">Binds directly to 23S ribosomal RNA and is necessary for the in vitro assembly process of the 50S ribosomal subunit. It is not involved in the protein synthesizing functions of that subunit.</text>
</comment>
<comment type="similarity">
    <text evidence="1">Belongs to the bacterial ribosomal protein bL20 family.</text>
</comment>
<protein>
    <recommendedName>
        <fullName evidence="1">Large ribosomal subunit protein bL20</fullName>
    </recommendedName>
    <alternativeName>
        <fullName evidence="2">50S ribosomal protein L20</fullName>
    </alternativeName>
</protein>
<dbReference type="EMBL" id="CP000026">
    <property type="protein sequence ID" value="AAV77440.1"/>
    <property type="molecule type" value="Genomic_DNA"/>
</dbReference>
<dbReference type="RefSeq" id="WP_000124850.1">
    <property type="nucleotide sequence ID" value="NC_006511.1"/>
</dbReference>
<dbReference type="SMR" id="Q5PH91"/>
<dbReference type="GeneID" id="98388757"/>
<dbReference type="KEGG" id="spt:SPA1507"/>
<dbReference type="HOGENOM" id="CLU_123265_0_1_6"/>
<dbReference type="Proteomes" id="UP000008185">
    <property type="component" value="Chromosome"/>
</dbReference>
<dbReference type="GO" id="GO:1990904">
    <property type="term" value="C:ribonucleoprotein complex"/>
    <property type="evidence" value="ECO:0007669"/>
    <property type="project" value="UniProtKB-KW"/>
</dbReference>
<dbReference type="GO" id="GO:0005840">
    <property type="term" value="C:ribosome"/>
    <property type="evidence" value="ECO:0007669"/>
    <property type="project" value="UniProtKB-KW"/>
</dbReference>
<dbReference type="GO" id="GO:0019843">
    <property type="term" value="F:rRNA binding"/>
    <property type="evidence" value="ECO:0007669"/>
    <property type="project" value="UniProtKB-UniRule"/>
</dbReference>
<dbReference type="GO" id="GO:0003735">
    <property type="term" value="F:structural constituent of ribosome"/>
    <property type="evidence" value="ECO:0007669"/>
    <property type="project" value="InterPro"/>
</dbReference>
<dbReference type="GO" id="GO:0000027">
    <property type="term" value="P:ribosomal large subunit assembly"/>
    <property type="evidence" value="ECO:0007669"/>
    <property type="project" value="UniProtKB-UniRule"/>
</dbReference>
<dbReference type="GO" id="GO:0006412">
    <property type="term" value="P:translation"/>
    <property type="evidence" value="ECO:0007669"/>
    <property type="project" value="InterPro"/>
</dbReference>
<dbReference type="CDD" id="cd07026">
    <property type="entry name" value="Ribosomal_L20"/>
    <property type="match status" value="1"/>
</dbReference>
<dbReference type="FunFam" id="1.10.1900.20:FF:000001">
    <property type="entry name" value="50S ribosomal protein L20"/>
    <property type="match status" value="1"/>
</dbReference>
<dbReference type="Gene3D" id="6.10.160.10">
    <property type="match status" value="1"/>
</dbReference>
<dbReference type="Gene3D" id="1.10.1900.20">
    <property type="entry name" value="Ribosomal protein L20"/>
    <property type="match status" value="1"/>
</dbReference>
<dbReference type="HAMAP" id="MF_00382">
    <property type="entry name" value="Ribosomal_bL20"/>
    <property type="match status" value="1"/>
</dbReference>
<dbReference type="InterPro" id="IPR005813">
    <property type="entry name" value="Ribosomal_bL20"/>
</dbReference>
<dbReference type="InterPro" id="IPR049946">
    <property type="entry name" value="RIBOSOMAL_L20_CS"/>
</dbReference>
<dbReference type="InterPro" id="IPR035566">
    <property type="entry name" value="Ribosomal_protein_bL20_C"/>
</dbReference>
<dbReference type="NCBIfam" id="TIGR01032">
    <property type="entry name" value="rplT_bact"/>
    <property type="match status" value="1"/>
</dbReference>
<dbReference type="PANTHER" id="PTHR10986">
    <property type="entry name" value="39S RIBOSOMAL PROTEIN L20"/>
    <property type="match status" value="1"/>
</dbReference>
<dbReference type="Pfam" id="PF00453">
    <property type="entry name" value="Ribosomal_L20"/>
    <property type="match status" value="1"/>
</dbReference>
<dbReference type="PRINTS" id="PR00062">
    <property type="entry name" value="RIBOSOMALL20"/>
</dbReference>
<dbReference type="SUPFAM" id="SSF74731">
    <property type="entry name" value="Ribosomal protein L20"/>
    <property type="match status" value="1"/>
</dbReference>
<dbReference type="PROSITE" id="PS00937">
    <property type="entry name" value="RIBOSOMAL_L20"/>
    <property type="match status" value="1"/>
</dbReference>
<reference key="1">
    <citation type="journal article" date="2004" name="Nat. Genet.">
        <title>Comparison of genome degradation in Paratyphi A and Typhi, human-restricted serovars of Salmonella enterica that cause typhoid.</title>
        <authorList>
            <person name="McClelland M."/>
            <person name="Sanderson K.E."/>
            <person name="Clifton S.W."/>
            <person name="Latreille P."/>
            <person name="Porwollik S."/>
            <person name="Sabo A."/>
            <person name="Meyer R."/>
            <person name="Bieri T."/>
            <person name="Ozersky P."/>
            <person name="McLellan M."/>
            <person name="Harkins C.R."/>
            <person name="Wang C."/>
            <person name="Nguyen C."/>
            <person name="Berghoff A."/>
            <person name="Elliott G."/>
            <person name="Kohlberg S."/>
            <person name="Strong C."/>
            <person name="Du F."/>
            <person name="Carter J."/>
            <person name="Kremizki C."/>
            <person name="Layman D."/>
            <person name="Leonard S."/>
            <person name="Sun H."/>
            <person name="Fulton L."/>
            <person name="Nash W."/>
            <person name="Miner T."/>
            <person name="Minx P."/>
            <person name="Delehaunty K."/>
            <person name="Fronick C."/>
            <person name="Magrini V."/>
            <person name="Nhan M."/>
            <person name="Warren W."/>
            <person name="Florea L."/>
            <person name="Spieth J."/>
            <person name="Wilson R.K."/>
        </authorList>
    </citation>
    <scope>NUCLEOTIDE SEQUENCE [LARGE SCALE GENOMIC DNA]</scope>
    <source>
        <strain>ATCC 9150 / SARB42</strain>
    </source>
</reference>
<accession>Q5PH91</accession>
<organism>
    <name type="scientific">Salmonella paratyphi A (strain ATCC 9150 / SARB42)</name>
    <dbReference type="NCBI Taxonomy" id="295319"/>
    <lineage>
        <taxon>Bacteria</taxon>
        <taxon>Pseudomonadati</taxon>
        <taxon>Pseudomonadota</taxon>
        <taxon>Gammaproteobacteria</taxon>
        <taxon>Enterobacterales</taxon>
        <taxon>Enterobacteriaceae</taxon>
        <taxon>Salmonella</taxon>
    </lineage>
</organism>
<proteinExistence type="inferred from homology"/>
<evidence type="ECO:0000255" key="1">
    <source>
        <dbReference type="HAMAP-Rule" id="MF_00382"/>
    </source>
</evidence>
<evidence type="ECO:0000305" key="2"/>
<sequence>MARVKRGVIARARHKKILKQAKGYYGARSRVYRVAFQAVIKAGQYAYRDRRQRKRQFRQLWIARINAAARQNGISYSKFINGLKKASVEIDRKILADIAVFDKVAFTALVEKAKAALA</sequence>